<dbReference type="EMBL" id="U04367">
    <property type="protein sequence ID" value="AAA21120.1"/>
    <property type="molecule type" value="Genomic_DNA"/>
</dbReference>
<dbReference type="SMR" id="Q45707"/>
<dbReference type="GO" id="GO:0005102">
    <property type="term" value="F:signaling receptor binding"/>
    <property type="evidence" value="ECO:0007669"/>
    <property type="project" value="InterPro"/>
</dbReference>
<dbReference type="GO" id="GO:0090729">
    <property type="term" value="F:toxin activity"/>
    <property type="evidence" value="ECO:0007669"/>
    <property type="project" value="UniProtKB-KW"/>
</dbReference>
<dbReference type="GO" id="GO:0030435">
    <property type="term" value="P:sporulation resulting in formation of a cellular spore"/>
    <property type="evidence" value="ECO:0007669"/>
    <property type="project" value="UniProtKB-KW"/>
</dbReference>
<dbReference type="GO" id="GO:0001907">
    <property type="term" value="P:symbiont-mediated killing of host cell"/>
    <property type="evidence" value="ECO:0007669"/>
    <property type="project" value="InterPro"/>
</dbReference>
<dbReference type="CDD" id="cd04085">
    <property type="entry name" value="delta_endotoxin_C"/>
    <property type="match status" value="1"/>
</dbReference>
<dbReference type="Gene3D" id="2.60.120.260">
    <property type="entry name" value="Galactose-binding domain-like"/>
    <property type="match status" value="1"/>
</dbReference>
<dbReference type="Gene3D" id="2.100.10.10">
    <property type="entry name" value="Pesticidal crystal protein, central domain"/>
    <property type="match status" value="1"/>
</dbReference>
<dbReference type="Gene3D" id="1.20.190.10">
    <property type="entry name" value="Pesticidal crystal protein, N-terminal domain"/>
    <property type="match status" value="1"/>
</dbReference>
<dbReference type="InterPro" id="IPR048645">
    <property type="entry name" value="Cry1Ac-like_dom-VII"/>
</dbReference>
<dbReference type="InterPro" id="IPR041587">
    <property type="entry name" value="Cry_V"/>
</dbReference>
<dbReference type="InterPro" id="IPR008979">
    <property type="entry name" value="Galactose-bd-like_sf"/>
</dbReference>
<dbReference type="InterPro" id="IPR038979">
    <property type="entry name" value="Pest_crys"/>
</dbReference>
<dbReference type="InterPro" id="IPR005638">
    <property type="entry name" value="Pest_crys_dom-III"/>
</dbReference>
<dbReference type="InterPro" id="IPR005639">
    <property type="entry name" value="Pest_crys_dom_I"/>
</dbReference>
<dbReference type="InterPro" id="IPR036716">
    <property type="entry name" value="Pest_crys_N_sf"/>
</dbReference>
<dbReference type="InterPro" id="IPR036399">
    <property type="entry name" value="Pest_cryst_cen_dom_sf"/>
</dbReference>
<dbReference type="InterPro" id="IPR001178">
    <property type="entry name" value="Pest_cryst_dom_II"/>
</dbReference>
<dbReference type="PANTHER" id="PTHR37003">
    <property type="entry name" value="ENDOTOXIN_N DOMAIN-CONTAINING PROTEIN-RELATED"/>
    <property type="match status" value="1"/>
</dbReference>
<dbReference type="PANTHER" id="PTHR37003:SF2">
    <property type="entry name" value="PESTICIDAL CRYSTAL PROTEIN N-TERMINAL DOMAIN-CONTAINING PROTEIN"/>
    <property type="match status" value="1"/>
</dbReference>
<dbReference type="Pfam" id="PF17997">
    <property type="entry name" value="Cry1Ac_D5"/>
    <property type="match status" value="1"/>
</dbReference>
<dbReference type="Pfam" id="PF21463">
    <property type="entry name" value="Cry1Ac_dom-VII"/>
    <property type="match status" value="1"/>
</dbReference>
<dbReference type="Pfam" id="PF03944">
    <property type="entry name" value="Endotoxin_C"/>
    <property type="match status" value="1"/>
</dbReference>
<dbReference type="Pfam" id="PF00555">
    <property type="entry name" value="Endotoxin_M"/>
    <property type="match status" value="1"/>
</dbReference>
<dbReference type="Pfam" id="PF03945">
    <property type="entry name" value="Endotoxin_N"/>
    <property type="match status" value="1"/>
</dbReference>
<dbReference type="SUPFAM" id="SSF51096">
    <property type="entry name" value="delta-Endotoxin (insectocide), middle domain"/>
    <property type="match status" value="1"/>
</dbReference>
<dbReference type="SUPFAM" id="SSF56849">
    <property type="entry name" value="delta-Endotoxin (insectocide), N-terminal domain"/>
    <property type="match status" value="1"/>
</dbReference>
<dbReference type="SUPFAM" id="SSF49785">
    <property type="entry name" value="Galactose-binding domain-like"/>
    <property type="match status" value="2"/>
</dbReference>
<proteinExistence type="evidence at transcript level"/>
<comment type="function">
    <text>Promotes colloidosmotic lysis by binding to the midgut epithelial cells of Coleoptera.</text>
</comment>
<comment type="developmental stage">
    <text>The crystal protein is produced during sporulation and is accumulated both as an inclusion and as part of the spore coat.</text>
</comment>
<comment type="miscellaneous">
    <text>Toxic segment of the protein is located in the N-terminus.</text>
</comment>
<comment type="similarity">
    <text evidence="1">Belongs to the delta endotoxin family.</text>
</comment>
<keyword id="KW-0749">Sporulation</keyword>
<keyword id="KW-0800">Toxin</keyword>
<keyword id="KW-0843">Virulence</keyword>
<gene>
    <name type="primary">cry7Ab</name>
    <name type="synonym">cryVIIA(b)</name>
</gene>
<feature type="chain" id="PRO_0000174073" description="Pesticidal crystal protein Cry7Ab">
    <location>
        <begin position="1"/>
        <end position="1138"/>
    </location>
</feature>
<accession>Q45707</accession>
<sequence length="1138" mass="129779">MNLNNLGGYEDSNRTLNNSLNYPTQKALSPSLKNMNYQDFLSITEREQPEALASGNTAINTVVSVTGATLSALGVPGASFITNFYLKITGLLWPHNKNIWDEFMTEVETLIEQKIEQYARNKALAELEGLGNNLTIYQQALEDWLNNPDDPATITRVIDRFRILDALFESYMPSFRVAGYEIPLLTVYAQAANLHLALLRDSTLYGDKWGFTQNNIEENYNRQKKHISEYSNHCVKWYNSGLSRLNGSTYEQWINYNRFRREMILMVLDIAAVFPIYDPRMYSMETSTQLTREVYTDPISLSISNPDIGPSFSQMENTAFRTPHLVDYLDELYIYTSKYKAFSHEIQPDLFYWCVHKVSFKKSEQSNLYTTGIYGKTSGYISSGAYSFRGNDIYRTLAAPSVVVYPYTQNYGVEQVEFYGVKGHVHYRGDNKYDLTYDSIDQLPPDGEPIHEKYTHRLCHATAISKSTPDYDNATIPIFSWTHRSAEYYNRIYPNKIKKIPAVKMYKLDDLSTVVKGPGFTGGDLVKRGSNGYIGDIKATVNSPLSQKYRVRVRYATSVSGLFNVFINDEIALQKNFQSTVETIGEGKDLTYGSFGYIEYSTTIQFPNEHPKITLHLNHLSNNSPFYVDSIEFIPVDVNYDEKEKLEKAQKAVNTLFTEGRNALQKYVTDYKVDQVSILVDCISGDLYPNEKRELQNLVKYAKRLSYSRNLLLDPTFDSINSSEENGWYGSNGIVIGNGDFVFKGNYLIFSGTNDTQYPTYLYQKIDESKLKEYSRYKLKGFIESSQDLEAYVIRYDAKHRTLDVSDNLLPDILPENTCGEPNRCAAQQYLDENPSSECSSMQDGILSDSHSFSLNIDTGSINHNENLGIWVLFKISTLEGYAKFGNLEVIEDGPVIGEALARVKRQETKWRNKLAQMTTETQAIYTRAKQALDNLFANAQDSHLKIDVTFAEIAAARKIVQSIREVYMSWLSVVPGVNHPIFTELSGRVQRAFQLYDVRNVVRNGRFLNGLSDWIVTSDVNVQEENGNNVLVLNNWDAQVLRNVKLYQDRGYVLRVTARKIGIGEGYITITDEEGHTDQLRFTACEEIDASNAFISGYITKELEFFPDTEKVHIEIGETEGIFLVESIELFLMEELC</sequence>
<protein>
    <recommendedName>
        <fullName>Pesticidal crystal protein Cry7Ab</fullName>
    </recommendedName>
    <alternativeName>
        <fullName>130 kDa crystal protein</fullName>
    </alternativeName>
    <alternativeName>
        <fullName>Crystaline entomocidal protoxin</fullName>
    </alternativeName>
    <alternativeName>
        <fullName>Insecticidal delta-endotoxin CryVIIA(b)</fullName>
    </alternativeName>
</protein>
<organism>
    <name type="scientific">Bacillus thuringiensis subsp. dakota</name>
    <dbReference type="NCBI Taxonomy" id="132268"/>
    <lineage>
        <taxon>Bacteria</taxon>
        <taxon>Bacillati</taxon>
        <taxon>Bacillota</taxon>
        <taxon>Bacilli</taxon>
        <taxon>Bacillales</taxon>
        <taxon>Bacillaceae</taxon>
        <taxon>Bacillus</taxon>
        <taxon>Bacillus cereus group</taxon>
    </lineage>
</organism>
<reference key="1">
    <citation type="patent" date="1994-02-15" number="US5286486">
        <title>Coleopteran-active Bacillus thuringiensis isolates and genes encoding coleopteran-active toxins.</title>
        <authorList>
            <person name="Payne J.M."/>
            <person name="Fu J.M."/>
        </authorList>
    </citation>
    <scope>NUCLEOTIDE SEQUENCE [GENOMIC DNA]</scope>
    <source>
        <strain>HD511</strain>
    </source>
</reference>
<name>CR7AB_BACUA</name>
<evidence type="ECO:0000305" key="1"/>